<organism>
    <name type="scientific">Schizosaccharomyces pombe (strain 972 / ATCC 24843)</name>
    <name type="common">Fission yeast</name>
    <dbReference type="NCBI Taxonomy" id="284812"/>
    <lineage>
        <taxon>Eukaryota</taxon>
        <taxon>Fungi</taxon>
        <taxon>Dikarya</taxon>
        <taxon>Ascomycota</taxon>
        <taxon>Taphrinomycotina</taxon>
        <taxon>Schizosaccharomycetes</taxon>
        <taxon>Schizosaccharomycetales</taxon>
        <taxon>Schizosaccharomycetaceae</taxon>
        <taxon>Schizosaccharomyces</taxon>
    </lineage>
</organism>
<gene>
    <name type="primary">pdp3</name>
    <name type="ORF">SPAC23D3.01</name>
</gene>
<dbReference type="EMBL" id="CU329670">
    <property type="protein sequence ID" value="CAA91236.1"/>
    <property type="molecule type" value="Genomic_DNA"/>
</dbReference>
<dbReference type="PIR" id="S62492">
    <property type="entry name" value="S62492"/>
</dbReference>
<dbReference type="RefSeq" id="NP_594539.1">
    <property type="nucleotide sequence ID" value="NM_001019968.2"/>
</dbReference>
<dbReference type="SMR" id="Q09842"/>
<dbReference type="BioGRID" id="278544">
    <property type="interactions" value="9"/>
</dbReference>
<dbReference type="FunCoup" id="Q09842">
    <property type="interactions" value="7"/>
</dbReference>
<dbReference type="STRING" id="284812.Q09842"/>
<dbReference type="iPTMnet" id="Q09842"/>
<dbReference type="PaxDb" id="4896-SPAC23D3.01.1"/>
<dbReference type="EnsemblFungi" id="SPAC23D3.01.1">
    <property type="protein sequence ID" value="SPAC23D3.01.1:pep"/>
    <property type="gene ID" value="SPAC23D3.01"/>
</dbReference>
<dbReference type="GeneID" id="2542067"/>
<dbReference type="KEGG" id="spo:2542067"/>
<dbReference type="PomBase" id="SPAC23D3.01">
    <property type="gene designation" value="pdp3"/>
</dbReference>
<dbReference type="VEuPathDB" id="FungiDB:SPAC23D3.01"/>
<dbReference type="HOGENOM" id="CLU_683630_0_0_1"/>
<dbReference type="InParanoid" id="Q09842"/>
<dbReference type="OMA" id="QLEHRYH"/>
<dbReference type="PhylomeDB" id="Q09842"/>
<dbReference type="PRO" id="PR:Q09842"/>
<dbReference type="Proteomes" id="UP000002485">
    <property type="component" value="Chromosome I"/>
</dbReference>
<dbReference type="GO" id="GO:0033100">
    <property type="term" value="C:NuA3 histone acetyltransferase complex"/>
    <property type="evidence" value="ECO:0000266"/>
    <property type="project" value="PomBase"/>
</dbReference>
<dbReference type="GO" id="GO:0005634">
    <property type="term" value="C:nucleus"/>
    <property type="evidence" value="ECO:0007005"/>
    <property type="project" value="PomBase"/>
</dbReference>
<dbReference type="GO" id="GO:0035064">
    <property type="term" value="F:methylated histone binding"/>
    <property type="evidence" value="ECO:0000250"/>
    <property type="project" value="PomBase"/>
</dbReference>
<dbReference type="GO" id="GO:0006338">
    <property type="term" value="P:chromatin remodeling"/>
    <property type="evidence" value="ECO:0000255"/>
    <property type="project" value="PomBase"/>
</dbReference>
<dbReference type="GO" id="GO:0006974">
    <property type="term" value="P:DNA damage response"/>
    <property type="evidence" value="ECO:0007669"/>
    <property type="project" value="UniProtKB-KW"/>
</dbReference>
<dbReference type="CDD" id="cd05162">
    <property type="entry name" value="PWWP"/>
    <property type="match status" value="1"/>
</dbReference>
<dbReference type="Gene3D" id="2.30.30.140">
    <property type="match status" value="1"/>
</dbReference>
<dbReference type="InterPro" id="IPR000313">
    <property type="entry name" value="PWWP_dom"/>
</dbReference>
<dbReference type="Pfam" id="PF00855">
    <property type="entry name" value="PWWP"/>
    <property type="match status" value="1"/>
</dbReference>
<dbReference type="SMART" id="SM00293">
    <property type="entry name" value="PWWP"/>
    <property type="match status" value="1"/>
</dbReference>
<dbReference type="SUPFAM" id="SSF63748">
    <property type="entry name" value="Tudor/PWWP/MBT"/>
    <property type="match status" value="1"/>
</dbReference>
<dbReference type="PROSITE" id="PS50812">
    <property type="entry name" value="PWWP"/>
    <property type="match status" value="1"/>
</dbReference>
<reference key="1">
    <citation type="journal article" date="2002" name="Nature">
        <title>The genome sequence of Schizosaccharomyces pombe.</title>
        <authorList>
            <person name="Wood V."/>
            <person name="Gwilliam R."/>
            <person name="Rajandream M.A."/>
            <person name="Lyne M.H."/>
            <person name="Lyne R."/>
            <person name="Stewart A."/>
            <person name="Sgouros J.G."/>
            <person name="Peat N."/>
            <person name="Hayles J."/>
            <person name="Baker S.G."/>
            <person name="Basham D."/>
            <person name="Bowman S."/>
            <person name="Brooks K."/>
            <person name="Brown D."/>
            <person name="Brown S."/>
            <person name="Chillingworth T."/>
            <person name="Churcher C.M."/>
            <person name="Collins M."/>
            <person name="Connor R."/>
            <person name="Cronin A."/>
            <person name="Davis P."/>
            <person name="Feltwell T."/>
            <person name="Fraser A."/>
            <person name="Gentles S."/>
            <person name="Goble A."/>
            <person name="Hamlin N."/>
            <person name="Harris D.E."/>
            <person name="Hidalgo J."/>
            <person name="Hodgson G."/>
            <person name="Holroyd S."/>
            <person name="Hornsby T."/>
            <person name="Howarth S."/>
            <person name="Huckle E.J."/>
            <person name="Hunt S."/>
            <person name="Jagels K."/>
            <person name="James K.D."/>
            <person name="Jones L."/>
            <person name="Jones M."/>
            <person name="Leather S."/>
            <person name="McDonald S."/>
            <person name="McLean J."/>
            <person name="Mooney P."/>
            <person name="Moule S."/>
            <person name="Mungall K.L."/>
            <person name="Murphy L.D."/>
            <person name="Niblett D."/>
            <person name="Odell C."/>
            <person name="Oliver K."/>
            <person name="O'Neil S."/>
            <person name="Pearson D."/>
            <person name="Quail M.A."/>
            <person name="Rabbinowitsch E."/>
            <person name="Rutherford K.M."/>
            <person name="Rutter S."/>
            <person name="Saunders D."/>
            <person name="Seeger K."/>
            <person name="Sharp S."/>
            <person name="Skelton J."/>
            <person name="Simmonds M.N."/>
            <person name="Squares R."/>
            <person name="Squares S."/>
            <person name="Stevens K."/>
            <person name="Taylor K."/>
            <person name="Taylor R.G."/>
            <person name="Tivey A."/>
            <person name="Walsh S.V."/>
            <person name="Warren T."/>
            <person name="Whitehead S."/>
            <person name="Woodward J.R."/>
            <person name="Volckaert G."/>
            <person name="Aert R."/>
            <person name="Robben J."/>
            <person name="Grymonprez B."/>
            <person name="Weltjens I."/>
            <person name="Vanstreels E."/>
            <person name="Rieger M."/>
            <person name="Schaefer M."/>
            <person name="Mueller-Auer S."/>
            <person name="Gabel C."/>
            <person name="Fuchs M."/>
            <person name="Duesterhoeft A."/>
            <person name="Fritzc C."/>
            <person name="Holzer E."/>
            <person name="Moestl D."/>
            <person name="Hilbert H."/>
            <person name="Borzym K."/>
            <person name="Langer I."/>
            <person name="Beck A."/>
            <person name="Lehrach H."/>
            <person name="Reinhardt R."/>
            <person name="Pohl T.M."/>
            <person name="Eger P."/>
            <person name="Zimmermann W."/>
            <person name="Wedler H."/>
            <person name="Wambutt R."/>
            <person name="Purnelle B."/>
            <person name="Goffeau A."/>
            <person name="Cadieu E."/>
            <person name="Dreano S."/>
            <person name="Gloux S."/>
            <person name="Lelaure V."/>
            <person name="Mottier S."/>
            <person name="Galibert F."/>
            <person name="Aves S.J."/>
            <person name="Xiang Z."/>
            <person name="Hunt C."/>
            <person name="Moore K."/>
            <person name="Hurst S.M."/>
            <person name="Lucas M."/>
            <person name="Rochet M."/>
            <person name="Gaillardin C."/>
            <person name="Tallada V.A."/>
            <person name="Garzon A."/>
            <person name="Thode G."/>
            <person name="Daga R.R."/>
            <person name="Cruzado L."/>
            <person name="Jimenez J."/>
            <person name="Sanchez M."/>
            <person name="del Rey F."/>
            <person name="Benito J."/>
            <person name="Dominguez A."/>
            <person name="Revuelta J.L."/>
            <person name="Moreno S."/>
            <person name="Armstrong J."/>
            <person name="Forsburg S.L."/>
            <person name="Cerutti L."/>
            <person name="Lowe T."/>
            <person name="McCombie W.R."/>
            <person name="Paulsen I."/>
            <person name="Potashkin J."/>
            <person name="Shpakovski G.V."/>
            <person name="Ussery D."/>
            <person name="Barrell B.G."/>
            <person name="Nurse P."/>
        </authorList>
    </citation>
    <scope>NUCLEOTIDE SEQUENCE [LARGE SCALE GENOMIC DNA]</scope>
    <source>
        <strain>972 / ATCC 24843</strain>
    </source>
</reference>
<reference key="2">
    <citation type="journal article" date="2006" name="Nat. Biotechnol.">
        <title>ORFeome cloning and global analysis of protein localization in the fission yeast Schizosaccharomyces pombe.</title>
        <authorList>
            <person name="Matsuyama A."/>
            <person name="Arai R."/>
            <person name="Yashiroda Y."/>
            <person name="Shirai A."/>
            <person name="Kamata A."/>
            <person name="Sekido S."/>
            <person name="Kobayashi Y."/>
            <person name="Hashimoto A."/>
            <person name="Hamamoto M."/>
            <person name="Hiraoka Y."/>
            <person name="Horinouchi S."/>
            <person name="Yoshida M."/>
        </authorList>
    </citation>
    <scope>SUBCELLULAR LOCATION [LARGE SCALE ANALYSIS]</scope>
</reference>
<reference key="3">
    <citation type="journal article" date="2008" name="J. Proteome Res.">
        <title>Phosphoproteome analysis of fission yeast.</title>
        <authorList>
            <person name="Wilson-Grady J.T."/>
            <person name="Villen J."/>
            <person name="Gygi S.P."/>
        </authorList>
    </citation>
    <scope>PHOSPHORYLATION [LARGE SCALE ANALYSIS] AT SER-160; SER-162; SER-236; SER-238 AND SER-242</scope>
    <scope>IDENTIFICATION BY MASS SPECTROMETRY</scope>
</reference>
<reference key="4">
    <citation type="journal article" date="2012" name="J. Biol. Chem.">
        <title>Histone H3 lysine 14 acetylation is required for activation of a DNA damage checkpoint in fission yeast.</title>
        <authorList>
            <person name="Wang Y."/>
            <person name="Kallgren S.P."/>
            <person name="Reddy B.D."/>
            <person name="Kuntz K."/>
            <person name="Lopez-Maury L."/>
            <person name="Thompson J."/>
            <person name="Watt S."/>
            <person name="Ma C."/>
            <person name="Hou H."/>
            <person name="Shi Y."/>
            <person name="Yates J.R. III"/>
            <person name="Bahler J."/>
            <person name="O'Connell M.J."/>
            <person name="Jia S."/>
        </authorList>
    </citation>
    <scope>IDENTIFICATION BY MASS SPECTROMETRY</scope>
    <scope>IDENTIFICATION IN THE MST2 COMPLEX</scope>
    <scope>FUNCTION</scope>
</reference>
<evidence type="ECO:0000255" key="1">
    <source>
        <dbReference type="PROSITE-ProRule" id="PRU00162"/>
    </source>
</evidence>
<evidence type="ECO:0000256" key="2">
    <source>
        <dbReference type="SAM" id="MobiDB-lite"/>
    </source>
</evidence>
<evidence type="ECO:0000269" key="3">
    <source>
    </source>
</evidence>
<evidence type="ECO:0000269" key="4">
    <source>
    </source>
</evidence>
<evidence type="ECO:0000269" key="5">
    <source>
    </source>
</evidence>
<sequence length="407" mass="46856">MMVARTRSQKRKLEEINNQKKIKTKKKATGQQTSNTKNLRDVKKKGKQLAYVPRTSPRKSYKNGEYVLAKMSSFPWWPARVASQKSIPTEVRERLKRNFRMDNGIFVQFLPSRDYAIISSSNVLPLTVDESRFILDHDLSTKYIQKTVGLIIASVKRKVSFSDVEEDEFEPENTRKKLQKPIEKPKKEKIEATPKIDGGKRLKNEKSSAEISQTSKQRPSRRSARVRMATDNAQKSPSPIPSPKKTAKKRVRFAGSLEELPKFSLEYQLAQPISTVDMYAQVHYIRFNTLLYYRYQLQEILLSYNHYPQESDMSHVHQILEMIENFSAINSELLESTKLYSLFTLLVKLSDIPLDEKYDFSSRFSTLLLQFQAFVQPKTMTSNVSTAPIGKNAQVNTEAARPSVITT</sequence>
<proteinExistence type="evidence at protein level"/>
<feature type="chain" id="PRO_0000116417" description="PWWP domain-containing protein 3">
    <location>
        <begin position="1"/>
        <end position="407"/>
    </location>
</feature>
<feature type="domain" description="PWWP" evidence="1">
    <location>
        <begin position="63"/>
        <end position="129"/>
    </location>
</feature>
<feature type="region of interest" description="Disordered" evidence="2">
    <location>
        <begin position="1"/>
        <end position="46"/>
    </location>
</feature>
<feature type="region of interest" description="Disordered" evidence="2">
    <location>
        <begin position="163"/>
        <end position="248"/>
    </location>
</feature>
<feature type="compositionally biased region" description="Basic and acidic residues" evidence="2">
    <location>
        <begin position="172"/>
        <end position="208"/>
    </location>
</feature>
<feature type="modified residue" description="Phosphoserine" evidence="4">
    <location>
        <position position="160"/>
    </location>
</feature>
<feature type="modified residue" description="Phosphoserine" evidence="4">
    <location>
        <position position="162"/>
    </location>
</feature>
<feature type="modified residue" description="Phosphoserine" evidence="4">
    <location>
        <position position="236"/>
    </location>
</feature>
<feature type="modified residue" description="Phosphoserine" evidence="4">
    <location>
        <position position="238"/>
    </location>
</feature>
<feature type="modified residue" description="Phosphoserine" evidence="4">
    <location>
        <position position="242"/>
    </location>
</feature>
<accession>Q09842</accession>
<comment type="function">
    <text evidence="5">Component of the mst2 complex which is a highly specific H3 lysine 14 (H3K14) acetyltransferase that functions together with gcn5 to regulate global levels of H3K14 acetylation (H3K14ac), critical for DNA damage checkpoint activation.</text>
</comment>
<comment type="subunit">
    <text evidence="5">Component of the mst2 complex composed of at least eaf6, mst2, nto1, pdp3, ptf1, ptf2 and tfg3.</text>
</comment>
<comment type="subcellular location">
    <subcellularLocation>
        <location evidence="3">Nucleus</location>
    </subcellularLocation>
</comment>
<protein>
    <recommendedName>
        <fullName>PWWP domain-containing protein 3</fullName>
    </recommendedName>
</protein>
<keyword id="KW-0156">Chromatin regulator</keyword>
<keyword id="KW-0227">DNA damage</keyword>
<keyword id="KW-0539">Nucleus</keyword>
<keyword id="KW-0597">Phosphoprotein</keyword>
<keyword id="KW-1185">Reference proteome</keyword>
<name>PDP3_SCHPO</name>